<accession>P41091</accession>
<accession>A0A024RBY4</accession>
<accession>A8K2Y2</accession>
<accession>B2R5N2</accession>
<accession>B5BTZ4</accession>
<accession>Q53HK3</accession>
<sequence length="472" mass="51109">MAGGEAGVTLGQPHLSRQDLTTLDVTKLTPLSHEVISRQATINIGTIGHVAHGKSTVVKAISGVHTVRFKNELERNITIKLGYANAKIYKLDDPSCPRPECYRSCGSSTPDEFPTDIPGTKGNFKLVRHVSFVDCPGHDILMATMLNGAAVMDAALLLIAGNESCPQPQTSEHLAAIEIMKLKHILILQNKIDLVKESQAKEQYEQILAFVQGTVAEGAPIIPISAQLKYNIEVVCEYIVKKIPVPPRDFTSEPRLIVIRSFDVNKPGCEVDDLKGGVAGGSILKGVLKVGQEIEVRPGIVSKDSEGKLMCKPIFSKIVSLFAEHNDLQYAAPGGLIGVGTKIDPTLCRADRMVGQVLGAVGALPEIFTELEISYFLLRRLLGVRTEGDKKAAKVQKLSKNEVLMVNIGSLSTGGRVSAVKADLGKIVLTNPVCTEVGEKIALSRRVEKHWRLIGWGQIRRGVTIKPTVDDD</sequence>
<protein>
    <recommendedName>
        <fullName>Eukaryotic translation initiation factor 2 subunit 3</fullName>
        <ecNumber evidence="2">3.6.5.3</ecNumber>
    </recommendedName>
    <alternativeName>
        <fullName>Eukaryotic translation initiation factor 2 subunit gamma X</fullName>
        <shortName>eIF2-gamma X</shortName>
        <shortName>eIF2gX</shortName>
    </alternativeName>
</protein>
<gene>
    <name type="primary">EIF2S3</name>
    <name type="synonym">EIF2G</name>
</gene>
<keyword id="KW-0002">3D-structure</keyword>
<keyword id="KW-0007">Acetylation</keyword>
<keyword id="KW-0963">Cytoplasm</keyword>
<keyword id="KW-0903">Direct protein sequencing</keyword>
<keyword id="KW-0225">Disease variant</keyword>
<keyword id="KW-0887">Epilepsy</keyword>
<keyword id="KW-0342">GTP-binding</keyword>
<keyword id="KW-0378">Hydrolase</keyword>
<keyword id="KW-0396">Initiation factor</keyword>
<keyword id="KW-0991">Intellectual disability</keyword>
<keyword id="KW-0547">Nucleotide-binding</keyword>
<keyword id="KW-0550">Obesity</keyword>
<keyword id="KW-0597">Phosphoprotein</keyword>
<keyword id="KW-0648">Protein biosynthesis</keyword>
<keyword id="KW-1267">Proteomics identification</keyword>
<keyword id="KW-1185">Reference proteome</keyword>
<dbReference type="EC" id="3.6.5.3" evidence="2"/>
<dbReference type="EMBL" id="L19161">
    <property type="protein sequence ID" value="AAA19696.1"/>
    <property type="molecule type" value="mRNA"/>
</dbReference>
<dbReference type="EMBL" id="AK290397">
    <property type="protein sequence ID" value="BAF83086.1"/>
    <property type="molecule type" value="mRNA"/>
</dbReference>
<dbReference type="EMBL" id="AK312247">
    <property type="protein sequence ID" value="BAG35179.1"/>
    <property type="molecule type" value="mRNA"/>
</dbReference>
<dbReference type="EMBL" id="AB451230">
    <property type="protein sequence ID" value="BAG70044.1"/>
    <property type="molecule type" value="mRNA"/>
</dbReference>
<dbReference type="EMBL" id="AB451353">
    <property type="protein sequence ID" value="BAG70167.1"/>
    <property type="molecule type" value="mRNA"/>
</dbReference>
<dbReference type="EMBL" id="AK222577">
    <property type="protein sequence ID" value="BAD96297.1"/>
    <property type="molecule type" value="mRNA"/>
</dbReference>
<dbReference type="EMBL" id="CH471074">
    <property type="protein sequence ID" value="EAW99010.1"/>
    <property type="molecule type" value="Genomic_DNA"/>
</dbReference>
<dbReference type="EMBL" id="CH471074">
    <property type="protein sequence ID" value="EAW99011.1"/>
    <property type="molecule type" value="Genomic_DNA"/>
</dbReference>
<dbReference type="EMBL" id="CH471074">
    <property type="protein sequence ID" value="EAW99012.1"/>
    <property type="molecule type" value="Genomic_DNA"/>
</dbReference>
<dbReference type="EMBL" id="BC019906">
    <property type="protein sequence ID" value="AAH19906.1"/>
    <property type="molecule type" value="mRNA"/>
</dbReference>
<dbReference type="CCDS" id="CCDS14210.1"/>
<dbReference type="PIR" id="A53048">
    <property type="entry name" value="A53048"/>
</dbReference>
<dbReference type="RefSeq" id="NP_001406.1">
    <property type="nucleotide sequence ID" value="NM_001415.4"/>
</dbReference>
<dbReference type="PDB" id="6FEC">
    <property type="method" value="EM"/>
    <property type="resolution" value="6.30 A"/>
    <property type="chains" value="S=39-460"/>
</dbReference>
<dbReference type="PDB" id="6K71">
    <property type="method" value="EM"/>
    <property type="resolution" value="4.30 A"/>
    <property type="chains" value="P=1-472"/>
</dbReference>
<dbReference type="PDB" id="6K72">
    <property type="method" value="EM"/>
    <property type="resolution" value="4.60 A"/>
    <property type="chains" value="P=1-472"/>
</dbReference>
<dbReference type="PDB" id="6O81">
    <property type="method" value="EM"/>
    <property type="resolution" value="3.21 A"/>
    <property type="chains" value="S/T=1-472"/>
</dbReference>
<dbReference type="PDB" id="6O85">
    <property type="method" value="EM"/>
    <property type="resolution" value="3.03 A"/>
    <property type="chains" value="S=1-472"/>
</dbReference>
<dbReference type="PDB" id="6YBV">
    <property type="method" value="EM"/>
    <property type="resolution" value="3.80 A"/>
    <property type="chains" value="t=1-472"/>
</dbReference>
<dbReference type="PDB" id="6ZMW">
    <property type="method" value="EM"/>
    <property type="resolution" value="3.70 A"/>
    <property type="chains" value="t=1-472"/>
</dbReference>
<dbReference type="PDB" id="6ZP4">
    <property type="method" value="EM"/>
    <property type="resolution" value="2.90 A"/>
    <property type="chains" value="Y=1-472"/>
</dbReference>
<dbReference type="PDB" id="7A09">
    <property type="method" value="EM"/>
    <property type="resolution" value="3.50 A"/>
    <property type="chains" value="Y=1-472"/>
</dbReference>
<dbReference type="PDB" id="7D43">
    <property type="method" value="EM"/>
    <property type="resolution" value="4.30 A"/>
    <property type="chains" value="P=1-472"/>
</dbReference>
<dbReference type="PDB" id="7F66">
    <property type="method" value="EM"/>
    <property type="resolution" value="2.76 A"/>
    <property type="chains" value="S=1-472"/>
</dbReference>
<dbReference type="PDB" id="7F67">
    <property type="method" value="EM"/>
    <property type="resolution" value="3.59 A"/>
    <property type="chains" value="S/T=1-472"/>
</dbReference>
<dbReference type="PDB" id="7QP6">
    <property type="method" value="EM"/>
    <property type="resolution" value="4.70 A"/>
    <property type="chains" value="t=1-472"/>
</dbReference>
<dbReference type="PDB" id="7QP7">
    <property type="method" value="EM"/>
    <property type="resolution" value="3.70 A"/>
    <property type="chains" value="t=1-472"/>
</dbReference>
<dbReference type="PDB" id="8OZ0">
    <property type="method" value="EM"/>
    <property type="resolution" value="3.50 A"/>
    <property type="chains" value="E=1-472"/>
</dbReference>
<dbReference type="PDB" id="8PHD">
    <property type="method" value="X-ray"/>
    <property type="resolution" value="2.08 A"/>
    <property type="chains" value="B/D=363-472"/>
</dbReference>
<dbReference type="PDB" id="8PHV">
    <property type="method" value="X-ray"/>
    <property type="resolution" value="1.97 A"/>
    <property type="chains" value="B/D=363-472"/>
</dbReference>
<dbReference type="PDB" id="8PJ1">
    <property type="method" value="EM"/>
    <property type="resolution" value="3.40 A"/>
    <property type="chains" value="t=1-472"/>
</dbReference>
<dbReference type="PDB" id="8PJ2">
    <property type="method" value="EM"/>
    <property type="resolution" value="3.40 A"/>
    <property type="chains" value="t=1-472"/>
</dbReference>
<dbReference type="PDB" id="8PJ3">
    <property type="method" value="EM"/>
    <property type="resolution" value="3.70 A"/>
    <property type="chains" value="t=1-472"/>
</dbReference>
<dbReference type="PDB" id="8PJ4">
    <property type="method" value="EM"/>
    <property type="resolution" value="3.20 A"/>
    <property type="chains" value="t=1-472"/>
</dbReference>
<dbReference type="PDB" id="8PPL">
    <property type="method" value="EM"/>
    <property type="resolution" value="2.65 A"/>
    <property type="chains" value="It=1-472"/>
</dbReference>
<dbReference type="PDB" id="8QZZ">
    <property type="method" value="X-ray"/>
    <property type="resolution" value="3.35 A"/>
    <property type="chains" value="A=1-472"/>
</dbReference>
<dbReference type="PDBsum" id="6FEC"/>
<dbReference type="PDBsum" id="6K71"/>
<dbReference type="PDBsum" id="6K72"/>
<dbReference type="PDBsum" id="6O81"/>
<dbReference type="PDBsum" id="6O85"/>
<dbReference type="PDBsum" id="6YBV"/>
<dbReference type="PDBsum" id="6ZMW"/>
<dbReference type="PDBsum" id="6ZP4"/>
<dbReference type="PDBsum" id="7A09"/>
<dbReference type="PDBsum" id="7D43"/>
<dbReference type="PDBsum" id="7F66"/>
<dbReference type="PDBsum" id="7F67"/>
<dbReference type="PDBsum" id="7QP6"/>
<dbReference type="PDBsum" id="7QP7"/>
<dbReference type="PDBsum" id="8OZ0"/>
<dbReference type="PDBsum" id="8PHD"/>
<dbReference type="PDBsum" id="8PHV"/>
<dbReference type="PDBsum" id="8PJ1"/>
<dbReference type="PDBsum" id="8PJ2"/>
<dbReference type="PDBsum" id="8PJ3"/>
<dbReference type="PDBsum" id="8PJ4"/>
<dbReference type="PDBsum" id="8PPL"/>
<dbReference type="PDBsum" id="8QZZ"/>
<dbReference type="EMDB" id="EMD-0649"/>
<dbReference type="EMDB" id="EMD-0651"/>
<dbReference type="EMDB" id="EMD-10774"/>
<dbReference type="EMDB" id="EMD-11302"/>
<dbReference type="EMDB" id="EMD-11335"/>
<dbReference type="EMDB" id="EMD-11602"/>
<dbReference type="EMDB" id="EMD-14113"/>
<dbReference type="EMDB" id="EMD-14114"/>
<dbReference type="EMDB" id="EMD-17297"/>
<dbReference type="EMDB" id="EMD-17696"/>
<dbReference type="EMDB" id="EMD-17697"/>
<dbReference type="EMDB" id="EMD-17698"/>
<dbReference type="EMDB" id="EMD-17699"/>
<dbReference type="EMDB" id="EMD-17805"/>
<dbReference type="EMDB" id="EMD-30568"/>
<dbReference type="EMDB" id="EMD-31474"/>
<dbReference type="EMDB" id="EMD-31475"/>
<dbReference type="EMDB" id="EMD-4242"/>
<dbReference type="EMDB" id="EMD-9840"/>
<dbReference type="EMDB" id="EMD-9841"/>
<dbReference type="EMDB" id="EMD-9842"/>
<dbReference type="SMR" id="P41091"/>
<dbReference type="BioGRID" id="108287">
    <property type="interactions" value="324"/>
</dbReference>
<dbReference type="ComplexPortal" id="CPX-2716">
    <property type="entry name" value="Eukaryotic translation initiation factor 2 complex"/>
</dbReference>
<dbReference type="CORUM" id="P41091"/>
<dbReference type="FunCoup" id="P41091">
    <property type="interactions" value="2133"/>
</dbReference>
<dbReference type="IntAct" id="P41091">
    <property type="interactions" value="202"/>
</dbReference>
<dbReference type="MINT" id="P41091"/>
<dbReference type="STRING" id="9606.ENSP00000253039"/>
<dbReference type="DrugBank" id="DB04315">
    <property type="generic name" value="Guanosine-5'-Diphosphate"/>
</dbReference>
<dbReference type="GlyCosmos" id="P41091">
    <property type="glycosylation" value="1 site, 1 glycan"/>
</dbReference>
<dbReference type="GlyGen" id="P41091">
    <property type="glycosylation" value="2 sites, 1 O-linked glycan (2 sites)"/>
</dbReference>
<dbReference type="iPTMnet" id="P41091"/>
<dbReference type="MetOSite" id="P41091"/>
<dbReference type="PhosphoSitePlus" id="P41091"/>
<dbReference type="SwissPalm" id="P41091"/>
<dbReference type="BioMuta" id="EIF2S3"/>
<dbReference type="DMDM" id="729816"/>
<dbReference type="jPOST" id="P41091"/>
<dbReference type="MassIVE" id="P41091"/>
<dbReference type="PaxDb" id="9606-ENSP00000253039"/>
<dbReference type="PeptideAtlas" id="P41091"/>
<dbReference type="ProteomicsDB" id="55399"/>
<dbReference type="Pumba" id="P41091"/>
<dbReference type="Antibodypedia" id="10229">
    <property type="antibodies" value="208 antibodies from 27 providers"/>
</dbReference>
<dbReference type="DNASU" id="1968"/>
<dbReference type="Ensembl" id="ENST00000253039.9">
    <property type="protein sequence ID" value="ENSP00000253039.4"/>
    <property type="gene ID" value="ENSG00000130741.11"/>
</dbReference>
<dbReference type="GeneID" id="1968"/>
<dbReference type="KEGG" id="hsa:1968"/>
<dbReference type="MANE-Select" id="ENST00000253039.9">
    <property type="protein sequence ID" value="ENSP00000253039.4"/>
    <property type="RefSeq nucleotide sequence ID" value="NM_001415.4"/>
    <property type="RefSeq protein sequence ID" value="NP_001406.1"/>
</dbReference>
<dbReference type="UCSC" id="uc004dbc.5">
    <property type="organism name" value="human"/>
</dbReference>
<dbReference type="AGR" id="HGNC:3267"/>
<dbReference type="CTD" id="1968"/>
<dbReference type="DisGeNET" id="1968"/>
<dbReference type="GeneCards" id="EIF2S3"/>
<dbReference type="HGNC" id="HGNC:3267">
    <property type="gene designation" value="EIF2S3"/>
</dbReference>
<dbReference type="HPA" id="ENSG00000130741">
    <property type="expression patterns" value="Low tissue specificity"/>
</dbReference>
<dbReference type="MalaCards" id="EIF2S3"/>
<dbReference type="MIM" id="300148">
    <property type="type" value="phenotype"/>
</dbReference>
<dbReference type="MIM" id="300161">
    <property type="type" value="gene"/>
</dbReference>
<dbReference type="neXtProt" id="NX_P41091"/>
<dbReference type="OpenTargets" id="ENSG00000130741"/>
<dbReference type="Orphanet" id="85282">
    <property type="disease" value="MEHMO syndrome"/>
</dbReference>
<dbReference type="PharmGKB" id="PA27697"/>
<dbReference type="VEuPathDB" id="HostDB:ENSG00000130741"/>
<dbReference type="eggNOG" id="KOG0466">
    <property type="taxonomic scope" value="Eukaryota"/>
</dbReference>
<dbReference type="GeneTree" id="ENSGT00550000074801"/>
<dbReference type="HOGENOM" id="CLU_027154_0_1_1"/>
<dbReference type="InParanoid" id="P41091"/>
<dbReference type="OMA" id="NIGMVGH"/>
<dbReference type="OrthoDB" id="1045173at2759"/>
<dbReference type="PAN-GO" id="P41091">
    <property type="GO annotations" value="5 GO annotations based on evolutionary models"/>
</dbReference>
<dbReference type="PhylomeDB" id="P41091"/>
<dbReference type="TreeFam" id="TF101513"/>
<dbReference type="BRENDA" id="3.6.5.3">
    <property type="organism ID" value="2681"/>
</dbReference>
<dbReference type="PathwayCommons" id="P41091"/>
<dbReference type="Reactome" id="R-HSA-156827">
    <property type="pathway name" value="L13a-mediated translational silencing of Ceruloplasmin expression"/>
</dbReference>
<dbReference type="Reactome" id="R-HSA-381042">
    <property type="pathway name" value="PERK regulates gene expression"/>
</dbReference>
<dbReference type="Reactome" id="R-HSA-382556">
    <property type="pathway name" value="ABC-family proteins mediated transport"/>
</dbReference>
<dbReference type="Reactome" id="R-HSA-72649">
    <property type="pathway name" value="Translation initiation complex formation"/>
</dbReference>
<dbReference type="Reactome" id="R-HSA-72695">
    <property type="pathway name" value="Formation of the ternary complex, and subsequently, the 43S complex"/>
</dbReference>
<dbReference type="Reactome" id="R-HSA-72702">
    <property type="pathway name" value="Ribosomal scanning and start codon recognition"/>
</dbReference>
<dbReference type="Reactome" id="R-HSA-72706">
    <property type="pathway name" value="GTP hydrolysis and joining of the 60S ribosomal subunit"/>
</dbReference>
<dbReference type="Reactome" id="R-HSA-72731">
    <property type="pathway name" value="Recycling of eIF2:GDP"/>
</dbReference>
<dbReference type="Reactome" id="R-HSA-9633012">
    <property type="pathway name" value="Response of EIF2AK4 (GCN2) to amino acid deficiency"/>
</dbReference>
<dbReference type="Reactome" id="R-HSA-9648895">
    <property type="pathway name" value="Response of EIF2AK1 (HRI) to heme deficiency"/>
</dbReference>
<dbReference type="Reactome" id="R-HSA-9833482">
    <property type="pathway name" value="PKR-mediated signaling"/>
</dbReference>
<dbReference type="Reactome" id="R-HSA-9840373">
    <property type="pathway name" value="Cellular response to mitochondrial stress"/>
</dbReference>
<dbReference type="SignaLink" id="P41091"/>
<dbReference type="SIGNOR" id="P41091"/>
<dbReference type="BioGRID-ORCS" id="1968">
    <property type="hits" value="454 hits in 778 CRISPR screens"/>
</dbReference>
<dbReference type="CD-CODE" id="91857CE7">
    <property type="entry name" value="Nucleolus"/>
</dbReference>
<dbReference type="CD-CODE" id="DEE660B4">
    <property type="entry name" value="Stress granule"/>
</dbReference>
<dbReference type="ChiTaRS" id="EIF2S3">
    <property type="organism name" value="human"/>
</dbReference>
<dbReference type="GeneWiki" id="EIF2S3"/>
<dbReference type="GenomeRNAi" id="1968"/>
<dbReference type="Pharos" id="P41091">
    <property type="development level" value="Tbio"/>
</dbReference>
<dbReference type="PRO" id="PR:P41091"/>
<dbReference type="Proteomes" id="UP000005640">
    <property type="component" value="Chromosome X"/>
</dbReference>
<dbReference type="RNAct" id="P41091">
    <property type="molecule type" value="protein"/>
</dbReference>
<dbReference type="Bgee" id="ENSG00000130741">
    <property type="expression patterns" value="Expressed in germinal epithelium of ovary and 190 other cell types or tissues"/>
</dbReference>
<dbReference type="ExpressionAtlas" id="P41091">
    <property type="expression patterns" value="baseline and differential"/>
</dbReference>
<dbReference type="GO" id="GO:0005737">
    <property type="term" value="C:cytoplasm"/>
    <property type="evidence" value="ECO:0000314"/>
    <property type="project" value="UniProtKB"/>
</dbReference>
<dbReference type="GO" id="GO:0005829">
    <property type="term" value="C:cytosol"/>
    <property type="evidence" value="ECO:0000304"/>
    <property type="project" value="Reactome"/>
</dbReference>
<dbReference type="GO" id="GO:0005850">
    <property type="term" value="C:eukaryotic translation initiation factor 2 complex"/>
    <property type="evidence" value="ECO:0000314"/>
    <property type="project" value="UniProtKB"/>
</dbReference>
<dbReference type="GO" id="GO:0070062">
    <property type="term" value="C:extracellular exosome"/>
    <property type="evidence" value="ECO:0007005"/>
    <property type="project" value="UniProtKB"/>
</dbReference>
<dbReference type="GO" id="GO:0045296">
    <property type="term" value="F:cadherin binding"/>
    <property type="evidence" value="ECO:0007005"/>
    <property type="project" value="BHF-UCL"/>
</dbReference>
<dbReference type="GO" id="GO:0005525">
    <property type="term" value="F:GTP binding"/>
    <property type="evidence" value="ECO:0007669"/>
    <property type="project" value="UniProtKB-KW"/>
</dbReference>
<dbReference type="GO" id="GO:0003924">
    <property type="term" value="F:GTPase activity"/>
    <property type="evidence" value="ECO:0000304"/>
    <property type="project" value="ProtInc"/>
</dbReference>
<dbReference type="GO" id="GO:1990856">
    <property type="term" value="F:methionyl-initiator methionine tRNA binding"/>
    <property type="evidence" value="ECO:0000250"/>
    <property type="project" value="UniProtKB"/>
</dbReference>
<dbReference type="GO" id="GO:0008135">
    <property type="term" value="F:translation factor activity, RNA binding"/>
    <property type="evidence" value="ECO:0000314"/>
    <property type="project" value="UniProtKB"/>
</dbReference>
<dbReference type="GO" id="GO:0003743">
    <property type="term" value="F:translation initiation factor activity"/>
    <property type="evidence" value="ECO:0000314"/>
    <property type="project" value="UniProtKB"/>
</dbReference>
<dbReference type="GO" id="GO:0002183">
    <property type="term" value="P:cytoplasmic translational initiation"/>
    <property type="evidence" value="ECO:0000315"/>
    <property type="project" value="UniProtKB"/>
</dbReference>
<dbReference type="GO" id="GO:0001731">
    <property type="term" value="P:formation of translation preinitiation complex"/>
    <property type="evidence" value="ECO:0000318"/>
    <property type="project" value="GO_Central"/>
</dbReference>
<dbReference type="GO" id="GO:0006413">
    <property type="term" value="P:translational initiation"/>
    <property type="evidence" value="ECO:0000314"/>
    <property type="project" value="UniProtKB"/>
</dbReference>
<dbReference type="CDD" id="cd01888">
    <property type="entry name" value="eIF2_gamma"/>
    <property type="match status" value="1"/>
</dbReference>
<dbReference type="CDD" id="cd03688">
    <property type="entry name" value="eIF2_gamma_II"/>
    <property type="match status" value="1"/>
</dbReference>
<dbReference type="CDD" id="cd15490">
    <property type="entry name" value="eIF2_gamma_III"/>
    <property type="match status" value="1"/>
</dbReference>
<dbReference type="FunFam" id="2.40.30.10:FF:000009">
    <property type="entry name" value="Eukaryotic translation initiation factor 2 subunit gamma"/>
    <property type="match status" value="1"/>
</dbReference>
<dbReference type="FunFam" id="2.40.30.10:FF:000011">
    <property type="entry name" value="Eukaryotic translation initiation factor 2 subunit gamma"/>
    <property type="match status" value="1"/>
</dbReference>
<dbReference type="FunFam" id="3.40.50.300:FF:000065">
    <property type="entry name" value="Eukaryotic translation initiation factor 2 subunit gamma"/>
    <property type="match status" value="1"/>
</dbReference>
<dbReference type="Gene3D" id="3.40.50.300">
    <property type="entry name" value="P-loop containing nucleotide triphosphate hydrolases"/>
    <property type="match status" value="1"/>
</dbReference>
<dbReference type="Gene3D" id="2.40.30.10">
    <property type="entry name" value="Translation factors"/>
    <property type="match status" value="2"/>
</dbReference>
<dbReference type="InterPro" id="IPR004161">
    <property type="entry name" value="EFTu-like_2"/>
</dbReference>
<dbReference type="InterPro" id="IPR050543">
    <property type="entry name" value="eIF2G"/>
</dbReference>
<dbReference type="InterPro" id="IPR015256">
    <property type="entry name" value="eIF2g_C"/>
</dbReference>
<dbReference type="InterPro" id="IPR044127">
    <property type="entry name" value="eIF2g_dom_2"/>
</dbReference>
<dbReference type="InterPro" id="IPR044128">
    <property type="entry name" value="eIF2g_GTP-bd"/>
</dbReference>
<dbReference type="InterPro" id="IPR027417">
    <property type="entry name" value="P-loop_NTPase"/>
</dbReference>
<dbReference type="InterPro" id="IPR000795">
    <property type="entry name" value="T_Tr_GTP-bd_dom"/>
</dbReference>
<dbReference type="InterPro" id="IPR009000">
    <property type="entry name" value="Transl_B-barrel_sf"/>
</dbReference>
<dbReference type="InterPro" id="IPR009001">
    <property type="entry name" value="Transl_elong_EF1A/Init_IF2_C"/>
</dbReference>
<dbReference type="NCBIfam" id="NF003077">
    <property type="entry name" value="PRK04000.1"/>
    <property type="match status" value="1"/>
</dbReference>
<dbReference type="PANTHER" id="PTHR42854">
    <property type="entry name" value="EUKARYOTIC TRANSLATION INITIATION FACTOR 2 SUBUNIT 3 FAMILY MEMBER"/>
    <property type="match status" value="1"/>
</dbReference>
<dbReference type="PANTHER" id="PTHR42854:SF3">
    <property type="entry name" value="EUKARYOTIC TRANSLATION INITIATION FACTOR 2 SUBUNIT 3-RELATED"/>
    <property type="match status" value="1"/>
</dbReference>
<dbReference type="Pfam" id="PF09173">
    <property type="entry name" value="eIF2_C"/>
    <property type="match status" value="1"/>
</dbReference>
<dbReference type="Pfam" id="PF00009">
    <property type="entry name" value="GTP_EFTU"/>
    <property type="match status" value="1"/>
</dbReference>
<dbReference type="Pfam" id="PF03144">
    <property type="entry name" value="GTP_EFTU_D2"/>
    <property type="match status" value="1"/>
</dbReference>
<dbReference type="PRINTS" id="PR00315">
    <property type="entry name" value="ELONGATNFCT"/>
</dbReference>
<dbReference type="SUPFAM" id="SSF50465">
    <property type="entry name" value="EF-Tu/eEF-1alpha/eIF2-gamma C-terminal domain"/>
    <property type="match status" value="1"/>
</dbReference>
<dbReference type="SUPFAM" id="SSF52540">
    <property type="entry name" value="P-loop containing nucleoside triphosphate hydrolases"/>
    <property type="match status" value="1"/>
</dbReference>
<dbReference type="SUPFAM" id="SSF50447">
    <property type="entry name" value="Translation proteins"/>
    <property type="match status" value="1"/>
</dbReference>
<dbReference type="PROSITE" id="PS51722">
    <property type="entry name" value="G_TR_2"/>
    <property type="match status" value="1"/>
</dbReference>
<organism>
    <name type="scientific">Homo sapiens</name>
    <name type="common">Human</name>
    <dbReference type="NCBI Taxonomy" id="9606"/>
    <lineage>
        <taxon>Eukaryota</taxon>
        <taxon>Metazoa</taxon>
        <taxon>Chordata</taxon>
        <taxon>Craniata</taxon>
        <taxon>Vertebrata</taxon>
        <taxon>Euteleostomi</taxon>
        <taxon>Mammalia</taxon>
        <taxon>Eutheria</taxon>
        <taxon>Euarchontoglires</taxon>
        <taxon>Primates</taxon>
        <taxon>Haplorrhini</taxon>
        <taxon>Catarrhini</taxon>
        <taxon>Hominidae</taxon>
        <taxon>Homo</taxon>
    </lineage>
</organism>
<name>IF2G_HUMAN</name>
<evidence type="ECO:0000250" key="1">
    <source>
        <dbReference type="UniProtKB" id="P05198"/>
    </source>
</evidence>
<evidence type="ECO:0000250" key="2">
    <source>
        <dbReference type="UniProtKB" id="P32481"/>
    </source>
</evidence>
<evidence type="ECO:0000250" key="3">
    <source>
        <dbReference type="UniProtKB" id="Q09130"/>
    </source>
</evidence>
<evidence type="ECO:0000250" key="4">
    <source>
        <dbReference type="UniProtKB" id="Q9Z0N1"/>
    </source>
</evidence>
<evidence type="ECO:0000255" key="5">
    <source>
        <dbReference type="PROSITE-ProRule" id="PRU01059"/>
    </source>
</evidence>
<evidence type="ECO:0000269" key="6">
    <source>
    </source>
</evidence>
<evidence type="ECO:0000269" key="7">
    <source>
    </source>
</evidence>
<evidence type="ECO:0000269" key="8">
    <source>
    </source>
</evidence>
<evidence type="ECO:0000269" key="9">
    <source>
    </source>
</evidence>
<evidence type="ECO:0000269" key="10">
    <source>
    </source>
</evidence>
<evidence type="ECO:0000269" key="11">
    <source>
    </source>
</evidence>
<evidence type="ECO:0000269" key="12">
    <source>
    </source>
</evidence>
<evidence type="ECO:0000269" key="13">
    <source>
    </source>
</evidence>
<evidence type="ECO:0000269" key="14">
    <source>
    </source>
</evidence>
<evidence type="ECO:0000269" key="15">
    <source>
    </source>
</evidence>
<evidence type="ECO:0000269" key="16">
    <source>
    </source>
</evidence>
<evidence type="ECO:0000269" key="17">
    <source>
    </source>
</evidence>
<evidence type="ECO:0000269" key="18">
    <source ref="8"/>
</evidence>
<evidence type="ECO:0000305" key="19"/>
<evidence type="ECO:0000305" key="20">
    <source>
    </source>
</evidence>
<evidence type="ECO:0007744" key="21">
    <source>
        <dbReference type="PDB" id="6FEC"/>
    </source>
</evidence>
<evidence type="ECO:0007744" key="22">
    <source>
        <dbReference type="PDB" id="6K71"/>
    </source>
</evidence>
<evidence type="ECO:0007744" key="23">
    <source>
        <dbReference type="PDB" id="6K72"/>
    </source>
</evidence>
<evidence type="ECO:0007744" key="24">
    <source>
        <dbReference type="PDB" id="6O81"/>
    </source>
</evidence>
<evidence type="ECO:0007744" key="25">
    <source>
        <dbReference type="PDB" id="6O85"/>
    </source>
</evidence>
<evidence type="ECO:0007744" key="26">
    <source>
        <dbReference type="PDB" id="8PHD"/>
    </source>
</evidence>
<evidence type="ECO:0007744" key="27">
    <source>
        <dbReference type="PDB" id="8PHV"/>
    </source>
</evidence>
<evidence type="ECO:0007829" key="28">
    <source>
        <dbReference type="PDB" id="6O85"/>
    </source>
</evidence>
<evidence type="ECO:0007829" key="29">
    <source>
        <dbReference type="PDB" id="7F66"/>
    </source>
</evidence>
<evidence type="ECO:0007829" key="30">
    <source>
        <dbReference type="PDB" id="8PHV"/>
    </source>
</evidence>
<evidence type="ECO:0007829" key="31">
    <source>
        <dbReference type="PDB" id="8QZZ"/>
    </source>
</evidence>
<proteinExistence type="evidence at protein level"/>
<feature type="initiator methionine" description="Removed" evidence="6 18">
    <location>
        <position position="1"/>
    </location>
</feature>
<feature type="chain" id="PRO_0000137438" description="Eukaryotic translation initiation factor 2 subunit 3">
    <location>
        <begin position="2"/>
        <end position="472"/>
    </location>
</feature>
<feature type="domain" description="tr-type G" evidence="5">
    <location>
        <begin position="39"/>
        <end position="248"/>
    </location>
</feature>
<feature type="region of interest" description="G1" evidence="5">
    <location>
        <begin position="48"/>
        <end position="55"/>
    </location>
</feature>
<feature type="region of interest" description="G2" evidence="5">
    <location>
        <begin position="76"/>
        <end position="80"/>
    </location>
</feature>
<feature type="region of interest" description="G3" evidence="5">
    <location>
        <begin position="134"/>
        <end position="137"/>
    </location>
</feature>
<feature type="region of interest" description="G4" evidence="5">
    <location>
        <begin position="190"/>
        <end position="193"/>
    </location>
</feature>
<feature type="region of interest" description="G5" evidence="5">
    <location>
        <begin position="225"/>
        <end position="227"/>
    </location>
</feature>
<feature type="region of interest" description="Interacts with CDC123" evidence="20">
    <location>
        <begin position="457"/>
        <end position="469"/>
    </location>
</feature>
<feature type="binding site" evidence="2">
    <location>
        <begin position="51"/>
        <end position="56"/>
    </location>
    <ligand>
        <name>GTP</name>
        <dbReference type="ChEBI" id="CHEBI:37565"/>
    </ligand>
</feature>
<feature type="binding site" evidence="2">
    <location>
        <begin position="190"/>
        <end position="193"/>
    </location>
    <ligand>
        <name>GTP</name>
        <dbReference type="ChEBI" id="CHEBI:37565"/>
    </ligand>
</feature>
<feature type="binding site" evidence="2">
    <location>
        <begin position="225"/>
        <end position="227"/>
    </location>
    <ligand>
        <name>GTP</name>
        <dbReference type="ChEBI" id="CHEBI:37565"/>
    </ligand>
</feature>
<feature type="modified residue" description="N-acetylalanine; partial" evidence="18">
    <location>
        <position position="2"/>
    </location>
</feature>
<feature type="modified residue" description="Phosphoserine" evidence="4">
    <location>
        <position position="16"/>
    </location>
</feature>
<feature type="sequence variant" id="VAR_078100" description="In MEHMO; uncertain significance; dbSNP:rs1057515578." evidence="9">
    <original>S</original>
    <variation>R</variation>
    <location>
        <position position="108"/>
    </location>
</feature>
<feature type="sequence variant" id="VAR_002352" description="In dbSNP:rs16997659.">
    <original>K</original>
    <variation>R</variation>
    <location>
        <position position="125"/>
    </location>
</feature>
<feature type="sequence variant" id="VAR_088599" description="In MEHMO; dbSNP:rs751468976." evidence="14">
    <original>T</original>
    <variation>I</variation>
    <location>
        <position position="144"/>
    </location>
</feature>
<feature type="sequence variant" id="VAR_088600" description="In MEHMO." evidence="14">
    <original>I</original>
    <variation>L</variation>
    <location>
        <position position="159"/>
    </location>
</feature>
<feature type="sequence variant" id="VAR_077139" description="In MEHMO; decreased interaction with the other eIF2 complex subunits EIF2S1 and EIF2S2; dbSNP:rs886040855." evidence="7">
    <original>I</original>
    <variation>T</variation>
    <location>
        <position position="222"/>
    </location>
</feature>
<feature type="sequence variant" id="VAR_077140" description="In MEHMO; impairs eIF2 complex function.; dbSNP:rs886040856." evidence="8 10">
    <original>I</original>
    <variation>M</variation>
    <location>
        <position position="259"/>
    </location>
</feature>
<feature type="sequence variant" id="VAR_088601" description="Found in patients with hypopituitarism with glucose dysregulation; dbSNP:rs2147131515." evidence="11">
    <original>P</original>
    <variation>S</variation>
    <location>
        <position position="432"/>
    </location>
</feature>
<feature type="sequence conflict" description="In Ref. 2; BAF83086." evidence="19" ref="2">
    <original>N</original>
    <variation>D</variation>
    <location>
        <position position="43"/>
    </location>
</feature>
<feature type="sequence conflict" description="In Ref. 2; BAG35179." evidence="19" ref="2">
    <original>Q</original>
    <variation>R</variation>
    <location>
        <position position="292"/>
    </location>
</feature>
<feature type="sequence conflict" description="In Ref. 4; BAD96297." evidence="19" ref="4">
    <original>N</original>
    <variation>S</variation>
    <location>
        <position position="407"/>
    </location>
</feature>
<feature type="turn" evidence="31">
    <location>
        <begin position="20"/>
        <end position="22"/>
    </location>
</feature>
<feature type="helix" evidence="31">
    <location>
        <begin position="25"/>
        <end position="27"/>
    </location>
</feature>
<feature type="turn" evidence="29">
    <location>
        <begin position="35"/>
        <end position="37"/>
    </location>
</feature>
<feature type="strand" evidence="29">
    <location>
        <begin position="42"/>
        <end position="45"/>
    </location>
</feature>
<feature type="helix" evidence="29">
    <location>
        <begin position="54"/>
        <end position="61"/>
    </location>
</feature>
<feature type="strand" evidence="29">
    <location>
        <begin position="64"/>
        <end position="66"/>
    </location>
</feature>
<feature type="strand" evidence="29">
    <location>
        <begin position="77"/>
        <end position="80"/>
    </location>
</feature>
<feature type="strand" evidence="29">
    <location>
        <begin position="83"/>
        <end position="90"/>
    </location>
</feature>
<feature type="turn" evidence="31">
    <location>
        <begin position="98"/>
        <end position="101"/>
    </location>
</feature>
<feature type="strand" evidence="31">
    <location>
        <begin position="102"/>
        <end position="105"/>
    </location>
</feature>
<feature type="strand" evidence="31">
    <location>
        <begin position="111"/>
        <end position="114"/>
    </location>
</feature>
<feature type="strand" evidence="29">
    <location>
        <begin position="125"/>
        <end position="133"/>
    </location>
</feature>
<feature type="helix" evidence="29">
    <location>
        <begin position="138"/>
        <end position="145"/>
    </location>
</feature>
<feature type="strand" evidence="29">
    <location>
        <begin position="147"/>
        <end position="151"/>
    </location>
</feature>
<feature type="strand" evidence="28">
    <location>
        <begin position="153"/>
        <end position="159"/>
    </location>
</feature>
<feature type="helix" evidence="29">
    <location>
        <begin position="166"/>
        <end position="178"/>
    </location>
</feature>
<feature type="strand" evidence="28">
    <location>
        <begin position="185"/>
        <end position="189"/>
    </location>
</feature>
<feature type="turn" evidence="31">
    <location>
        <begin position="192"/>
        <end position="194"/>
    </location>
</feature>
<feature type="helix" evidence="29">
    <location>
        <begin position="196"/>
        <end position="213"/>
    </location>
</feature>
<feature type="turn" evidence="29">
    <location>
        <begin position="214"/>
        <end position="216"/>
    </location>
</feature>
<feature type="strand" evidence="31">
    <location>
        <begin position="221"/>
        <end position="223"/>
    </location>
</feature>
<feature type="helix" evidence="29">
    <location>
        <begin position="229"/>
        <end position="242"/>
    </location>
</feature>
<feature type="strand" evidence="28">
    <location>
        <begin position="256"/>
        <end position="259"/>
    </location>
</feature>
<feature type="strand" evidence="29">
    <location>
        <begin position="270"/>
        <end position="273"/>
    </location>
</feature>
<feature type="strand" evidence="28">
    <location>
        <begin position="278"/>
        <end position="283"/>
    </location>
</feature>
<feature type="strand" evidence="29">
    <location>
        <begin position="293"/>
        <end position="302"/>
    </location>
</feature>
<feature type="strand" evidence="29">
    <location>
        <begin position="306"/>
        <end position="308"/>
    </location>
</feature>
<feature type="strand" evidence="29">
    <location>
        <begin position="310"/>
        <end position="318"/>
    </location>
</feature>
<feature type="strand" evidence="29">
    <location>
        <begin position="329"/>
        <end position="331"/>
    </location>
</feature>
<feature type="strand" evidence="29">
    <location>
        <begin position="333"/>
        <end position="336"/>
    </location>
</feature>
<feature type="strand" evidence="29">
    <location>
        <begin position="340"/>
        <end position="342"/>
    </location>
</feature>
<feature type="turn" evidence="29">
    <location>
        <begin position="345"/>
        <end position="347"/>
    </location>
</feature>
<feature type="helix" evidence="31">
    <location>
        <begin position="349"/>
        <end position="351"/>
    </location>
</feature>
<feature type="turn" evidence="31">
    <location>
        <begin position="352"/>
        <end position="355"/>
    </location>
</feature>
<feature type="strand" evidence="29">
    <location>
        <begin position="357"/>
        <end position="361"/>
    </location>
</feature>
<feature type="strand" evidence="30">
    <location>
        <begin position="366"/>
        <end position="377"/>
    </location>
</feature>
<feature type="strand" evidence="29">
    <location>
        <begin position="390"/>
        <end position="393"/>
    </location>
</feature>
<feature type="strand" evidence="30">
    <location>
        <begin position="403"/>
        <end position="408"/>
    </location>
</feature>
<feature type="strand" evidence="30">
    <location>
        <begin position="411"/>
        <end position="420"/>
    </location>
</feature>
<feature type="strand" evidence="30">
    <location>
        <begin position="422"/>
        <end position="435"/>
    </location>
</feature>
<feature type="strand" evidence="30">
    <location>
        <begin position="440"/>
        <end position="447"/>
    </location>
</feature>
<feature type="strand" evidence="30">
    <location>
        <begin position="450"/>
        <end position="464"/>
    </location>
</feature>
<comment type="function">
    <text evidence="1 13">Member of the eIF2 complex that functions in the early steps of protein synthesis by forming a ternary complex with GTP and initiator tRNA (PubMed:31836389). This complex binds to a 40S ribosomal subunit, followed by mRNA binding to form the 43S pre-initiation complex (43S PIC) (By similarity). Junction of the 60S ribosomal subunit to form the 80S initiation complex is preceded by hydrolysis of the GTP bound to eIF2 and release of an eIF2-GDP binary complex (By similarity). In order for eIF2 to recycle and catalyze another round of initiation, the GDP bound to eIF2 must exchange with GTP by way of a reaction catalyzed by eIF-2B (By similarity).</text>
</comment>
<comment type="catalytic activity">
    <reaction evidence="2">
        <text>GTP + H2O = GDP + phosphate + H(+)</text>
        <dbReference type="Rhea" id="RHEA:19669"/>
        <dbReference type="ChEBI" id="CHEBI:15377"/>
        <dbReference type="ChEBI" id="CHEBI:15378"/>
        <dbReference type="ChEBI" id="CHEBI:37565"/>
        <dbReference type="ChEBI" id="CHEBI:43474"/>
        <dbReference type="ChEBI" id="CHEBI:58189"/>
        <dbReference type="EC" id="3.6.5.3"/>
    </reaction>
</comment>
<comment type="subunit">
    <text evidence="7 12 13 15 16">Eukaryotic translation initiation factor 2 eIF2 is a heterotrimeric complex composed of an alpha (EIF2S1), a beta (EIF2S2) and a gamma (EIF2S3) chain (PubMed:23063529, PubMed:31048492, PubMed:31836389, PubMed:35031321). eIF2 is member of the 43S pre-initiation complex (43S PIC) (PubMed:23063529). Interacts (via C-terminus) with CDC123; the interaction is direct (PubMed:35031321, PubMed:37507029).</text>
</comment>
<comment type="interaction">
    <interactant intactId="EBI-1054228">
        <id>P41091</id>
    </interactant>
    <interactant intactId="EBI-18899653">
        <id>Q6DHV7-2</id>
        <label>ADAL</label>
    </interactant>
    <organismsDiffer>false</organismsDiffer>
    <experiments>3</experiments>
</comment>
<comment type="interaction">
    <interactant intactId="EBI-1054228">
        <id>P41091</id>
    </interactant>
    <interactant intactId="EBI-9089489">
        <id>Q96FT7-4</id>
        <label>ASIC4</label>
    </interactant>
    <organismsDiffer>false</organismsDiffer>
    <experiments>3</experiments>
</comment>
<comment type="interaction">
    <interactant intactId="EBI-1054228">
        <id>P41091</id>
    </interactant>
    <interactant intactId="EBI-742750">
        <id>Q8TBE0</id>
        <label>BAHD1</label>
    </interactant>
    <organismsDiffer>false</organismsDiffer>
    <experiments>3</experiments>
</comment>
<comment type="interaction">
    <interactant intactId="EBI-1054228">
        <id>P41091</id>
    </interactant>
    <interactant intactId="EBI-2808248">
        <id>O75794</id>
        <label>CDC123</label>
    </interactant>
    <organismsDiffer>false</organismsDiffer>
    <experiments>4</experiments>
</comment>
<comment type="interaction">
    <interactant intactId="EBI-1054228">
        <id>P41091</id>
    </interactant>
    <interactant intactId="EBI-375077">
        <id>P38936</id>
        <label>CDKN1A</label>
    </interactant>
    <organismsDiffer>false</organismsDiffer>
    <experiments>3</experiments>
</comment>
<comment type="interaction">
    <interactant intactId="EBI-1054228">
        <id>P41091</id>
    </interactant>
    <interactant intactId="EBI-23669343">
        <id>Q92782-2</id>
        <label>DPF1</label>
    </interactant>
    <organismsDiffer>false</organismsDiffer>
    <experiments>3</experiments>
</comment>
<comment type="interaction">
    <interactant intactId="EBI-1054228">
        <id>P41091</id>
    </interactant>
    <interactant intactId="EBI-372173">
        <id>O77932</id>
        <label>DXO</label>
    </interactant>
    <organismsDiffer>false</organismsDiffer>
    <experiments>3</experiments>
</comment>
<comment type="interaction">
    <interactant intactId="EBI-1054228">
        <id>P41091</id>
    </interactant>
    <interactant intactId="EBI-1056162">
        <id>P05198</id>
        <label>EIF2S1</label>
    </interactant>
    <organismsDiffer>false</organismsDiffer>
    <experiments>8</experiments>
</comment>
<comment type="interaction">
    <interactant intactId="EBI-1054228">
        <id>P41091</id>
    </interactant>
    <interactant intactId="EBI-711977">
        <id>P20042</id>
        <label>EIF2S2</label>
    </interactant>
    <organismsDiffer>false</organismsDiffer>
    <experiments>8</experiments>
</comment>
<comment type="interaction">
    <interactant intactId="EBI-1054228">
        <id>P41091</id>
    </interactant>
    <interactant intactId="EBI-3957005">
        <id>Q53R41</id>
        <label>FASTKD1</label>
    </interactant>
    <organismsDiffer>false</organismsDiffer>
    <experiments>3</experiments>
</comment>
<comment type="interaction">
    <interactant intactId="EBI-1054228">
        <id>P41091</id>
    </interactant>
    <interactant intactId="EBI-618189">
        <id>Q06547-2</id>
        <label>GABPB1</label>
    </interactant>
    <organismsDiffer>false</organismsDiffer>
    <experiments>3</experiments>
</comment>
<comment type="interaction">
    <interactant intactId="EBI-1054228">
        <id>P41091</id>
    </interactant>
    <interactant intactId="EBI-9088619">
        <id>Q06547-3</id>
        <label>GABPB1</label>
    </interactant>
    <organismsDiffer>false</organismsDiffer>
    <experiments>3</experiments>
</comment>
<comment type="interaction">
    <interactant intactId="EBI-1054228">
        <id>P41091</id>
    </interactant>
    <interactant intactId="EBI-466029">
        <id>P42858</id>
        <label>HTT</label>
    </interactant>
    <organismsDiffer>false</organismsDiffer>
    <experiments>3</experiments>
</comment>
<comment type="interaction">
    <interactant intactId="EBI-1054228">
        <id>P41091</id>
    </interactant>
    <interactant intactId="EBI-6509505">
        <id>Q0VD86</id>
        <label>INCA1</label>
    </interactant>
    <organismsDiffer>false</organismsDiffer>
    <experiments>3</experiments>
</comment>
<comment type="interaction">
    <interactant intactId="EBI-1054228">
        <id>P41091</id>
    </interactant>
    <interactant intactId="EBI-1052558">
        <id>Q92615</id>
        <label>LARP4B</label>
    </interactant>
    <organismsDiffer>false</organismsDiffer>
    <experiments>3</experiments>
</comment>
<comment type="interaction">
    <interactant intactId="EBI-1054228">
        <id>P41091</id>
    </interactant>
    <interactant intactId="EBI-476263">
        <id>Q99683</id>
        <label>MAP3K5</label>
    </interactant>
    <organismsDiffer>false</organismsDiffer>
    <experiments>3</experiments>
</comment>
<comment type="interaction">
    <interactant intactId="EBI-1054228">
        <id>P41091</id>
    </interactant>
    <interactant intactId="EBI-10174029">
        <id>A6NJ78-4</id>
        <label>METTL15</label>
    </interactant>
    <organismsDiffer>false</organismsDiffer>
    <experiments>3</experiments>
</comment>
<comment type="interaction">
    <interactant intactId="EBI-1054228">
        <id>P41091</id>
    </interactant>
    <interactant intactId="EBI-25830200">
        <id>Q6GQQ9-2</id>
        <label>OTUD7B</label>
    </interactant>
    <organismsDiffer>false</organismsDiffer>
    <experiments>3</experiments>
</comment>
<comment type="interaction">
    <interactant intactId="EBI-1054228">
        <id>P41091</id>
    </interactant>
    <interactant intactId="EBI-25852006">
        <id>Q8N2H9-4</id>
        <label>PELI3</label>
    </interactant>
    <organismsDiffer>false</organismsDiffer>
    <experiments>3</experiments>
</comment>
<comment type="interaction">
    <interactant intactId="EBI-1054228">
        <id>P41091</id>
    </interactant>
    <interactant intactId="EBI-2557276">
        <id>O15534</id>
        <label>PER1</label>
    </interactant>
    <organismsDiffer>false</organismsDiffer>
    <experiments>3</experiments>
</comment>
<comment type="interaction">
    <interactant intactId="EBI-1054228">
        <id>P41091</id>
    </interactant>
    <interactant intactId="EBI-710067">
        <id>Q9H1D9</id>
        <label>POLR3F</label>
    </interactant>
    <organismsDiffer>false</organismsDiffer>
    <experiments>3</experiments>
</comment>
<comment type="interaction">
    <interactant intactId="EBI-1054228">
        <id>P41091</id>
    </interactant>
    <interactant intactId="EBI-9089733">
        <id>Q9HD47-3</id>
        <label>RANGRF</label>
    </interactant>
    <organismsDiffer>false</organismsDiffer>
    <experiments>3</experiments>
</comment>
<comment type="interaction">
    <interactant intactId="EBI-1054228">
        <id>P41091</id>
    </interactant>
    <interactant intactId="EBI-438710">
        <id>Q9NS23-4</id>
        <label>RASSF1</label>
    </interactant>
    <organismsDiffer>false</organismsDiffer>
    <experiments>3</experiments>
</comment>
<comment type="interaction">
    <interactant intactId="EBI-1054228">
        <id>P41091</id>
    </interactant>
    <interactant intactId="EBI-10696971">
        <id>Q7Z6I5</id>
        <label>SPATA12</label>
    </interactant>
    <organismsDiffer>false</organismsDiffer>
    <experiments>3</experiments>
</comment>
<comment type="interaction">
    <interactant intactId="EBI-1054228">
        <id>P41091</id>
    </interactant>
    <interactant intactId="EBI-3923692">
        <id>Q496A3</id>
        <label>SPATS1</label>
    </interactant>
    <organismsDiffer>false</organismsDiffer>
    <experiments>3</experiments>
</comment>
<comment type="interaction">
    <interactant intactId="EBI-1054228">
        <id>P41091</id>
    </interactant>
    <interactant intactId="EBI-11123832">
        <id>O60506-4</id>
        <label>SYNCRIP</label>
    </interactant>
    <organismsDiffer>false</organismsDiffer>
    <experiments>3</experiments>
</comment>
<comment type="interaction">
    <interactant intactId="EBI-1054228">
        <id>P41091</id>
    </interactant>
    <interactant intactId="EBI-9089028">
        <id>Q7Z7C8-2</id>
        <label>TAF8</label>
    </interactant>
    <organismsDiffer>false</organismsDiffer>
    <experiments>3</experiments>
</comment>
<comment type="interaction">
    <interactant intactId="EBI-1054228">
        <id>P41091</id>
    </interactant>
    <interactant intactId="EBI-2339348">
        <id>P49459</id>
        <label>UBE2A</label>
    </interactant>
    <organismsDiffer>false</organismsDiffer>
    <experiments>3</experiments>
</comment>
<comment type="interaction">
    <interactant intactId="EBI-1054228">
        <id>P41091</id>
    </interactant>
    <interactant intactId="EBI-10316321">
        <id>Q9NX94</id>
        <label>WBP1L</label>
    </interactant>
    <organismsDiffer>false</organismsDiffer>
    <experiments>3</experiments>
</comment>
<comment type="interaction">
    <interactant intactId="EBI-1054228">
        <id>P41091</id>
    </interactant>
    <interactant intactId="EBI-1965777">
        <id>Q9BRR0</id>
        <label>ZKSCAN3</label>
    </interactant>
    <organismsDiffer>false</organismsDiffer>
    <experiments>3</experiments>
</comment>
<comment type="interaction">
    <interactant intactId="EBI-1054228">
        <id>P41091</id>
    </interactant>
    <interactant intactId="EBI-18036029">
        <id>Q3KNS6-3</id>
        <label>ZNF829</label>
    </interactant>
    <organismsDiffer>false</organismsDiffer>
    <experiments>3</experiments>
</comment>
<comment type="subcellular location">
    <subcellularLocation>
        <location evidence="3">Cytoplasm</location>
        <location evidence="3">Cytosol</location>
    </subcellularLocation>
</comment>
<comment type="tissue specificity">
    <text evidence="17">Expressed in testis, brain, liver and muscle.</text>
</comment>
<comment type="developmental stage">
    <text evidence="11">Expressed in the developing endocrine organs.</text>
</comment>
<comment type="disease" evidence="7 8 9 10 14">
    <disease id="DI-05173">
        <name>MEHMO syndrome</name>
        <acronym>MEHMO</acronym>
        <description>An X-linked recessive syndrome characterized by intellectual disability, epileptic seizures, hypogonadism and hypogenitalism, microcephaly, and obesity.</description>
        <dbReference type="MIM" id="300148"/>
    </disease>
    <text>The disease is caused by variants affecting the gene represented in this entry.</text>
</comment>
<comment type="disease">
    <text evidence="11">Defects in EIF2S3 are the cause of hypopituitarism with glucose dysregulation.</text>
</comment>
<comment type="miscellaneous">
    <text evidence="17">Encoded by an chromosome X-linked gene which escapes inactivation. Does not have any homolog on chromosome Y.</text>
</comment>
<comment type="similarity">
    <text evidence="5">Belongs to the TRAFAC class translation factor GTPase superfamily. Classic translation factor GTPase family. EIF2G subfamily.</text>
</comment>
<reference key="1">
    <citation type="journal article" date="1994" name="J. Biol. Chem.">
        <title>Translation initiation factor eIF-2. Cloning and expression of the human cDNA encoding the gamma-subunit.</title>
        <authorList>
            <person name="Gaspar N.J."/>
            <person name="Kinzy T.G."/>
            <person name="Scherer B.J."/>
            <person name="Huembelin M."/>
            <person name="Hershey J.W.B."/>
            <person name="Merrick W.C."/>
        </authorList>
    </citation>
    <scope>NUCLEOTIDE SEQUENCE [MRNA]</scope>
    <scope>PARTIAL PROTEIN SEQUENCE</scope>
    <source>
        <tissue>Leukemia</tissue>
    </source>
</reference>
<reference key="2">
    <citation type="journal article" date="2004" name="Nat. Genet.">
        <title>Complete sequencing and characterization of 21,243 full-length human cDNAs.</title>
        <authorList>
            <person name="Ota T."/>
            <person name="Suzuki Y."/>
            <person name="Nishikawa T."/>
            <person name="Otsuki T."/>
            <person name="Sugiyama T."/>
            <person name="Irie R."/>
            <person name="Wakamatsu A."/>
            <person name="Hayashi K."/>
            <person name="Sato H."/>
            <person name="Nagai K."/>
            <person name="Kimura K."/>
            <person name="Makita H."/>
            <person name="Sekine M."/>
            <person name="Obayashi M."/>
            <person name="Nishi T."/>
            <person name="Shibahara T."/>
            <person name="Tanaka T."/>
            <person name="Ishii S."/>
            <person name="Yamamoto J."/>
            <person name="Saito K."/>
            <person name="Kawai Y."/>
            <person name="Isono Y."/>
            <person name="Nakamura Y."/>
            <person name="Nagahari K."/>
            <person name="Murakami K."/>
            <person name="Yasuda T."/>
            <person name="Iwayanagi T."/>
            <person name="Wagatsuma M."/>
            <person name="Shiratori A."/>
            <person name="Sudo H."/>
            <person name="Hosoiri T."/>
            <person name="Kaku Y."/>
            <person name="Kodaira H."/>
            <person name="Kondo H."/>
            <person name="Sugawara M."/>
            <person name="Takahashi M."/>
            <person name="Kanda K."/>
            <person name="Yokoi T."/>
            <person name="Furuya T."/>
            <person name="Kikkawa E."/>
            <person name="Omura Y."/>
            <person name="Abe K."/>
            <person name="Kamihara K."/>
            <person name="Katsuta N."/>
            <person name="Sato K."/>
            <person name="Tanikawa M."/>
            <person name="Yamazaki M."/>
            <person name="Ninomiya K."/>
            <person name="Ishibashi T."/>
            <person name="Yamashita H."/>
            <person name="Murakawa K."/>
            <person name="Fujimori K."/>
            <person name="Tanai H."/>
            <person name="Kimata M."/>
            <person name="Watanabe M."/>
            <person name="Hiraoka S."/>
            <person name="Chiba Y."/>
            <person name="Ishida S."/>
            <person name="Ono Y."/>
            <person name="Takiguchi S."/>
            <person name="Watanabe S."/>
            <person name="Yosida M."/>
            <person name="Hotuta T."/>
            <person name="Kusano J."/>
            <person name="Kanehori K."/>
            <person name="Takahashi-Fujii A."/>
            <person name="Hara H."/>
            <person name="Tanase T.-O."/>
            <person name="Nomura Y."/>
            <person name="Togiya S."/>
            <person name="Komai F."/>
            <person name="Hara R."/>
            <person name="Takeuchi K."/>
            <person name="Arita M."/>
            <person name="Imose N."/>
            <person name="Musashino K."/>
            <person name="Yuuki H."/>
            <person name="Oshima A."/>
            <person name="Sasaki N."/>
            <person name="Aotsuka S."/>
            <person name="Yoshikawa Y."/>
            <person name="Matsunawa H."/>
            <person name="Ichihara T."/>
            <person name="Shiohata N."/>
            <person name="Sano S."/>
            <person name="Moriya S."/>
            <person name="Momiyama H."/>
            <person name="Satoh N."/>
            <person name="Takami S."/>
            <person name="Terashima Y."/>
            <person name="Suzuki O."/>
            <person name="Nakagawa S."/>
            <person name="Senoh A."/>
            <person name="Mizoguchi H."/>
            <person name="Goto Y."/>
            <person name="Shimizu F."/>
            <person name="Wakebe H."/>
            <person name="Hishigaki H."/>
            <person name="Watanabe T."/>
            <person name="Sugiyama A."/>
            <person name="Takemoto M."/>
            <person name="Kawakami B."/>
            <person name="Yamazaki M."/>
            <person name="Watanabe K."/>
            <person name="Kumagai A."/>
            <person name="Itakura S."/>
            <person name="Fukuzumi Y."/>
            <person name="Fujimori Y."/>
            <person name="Komiyama M."/>
            <person name="Tashiro H."/>
            <person name="Tanigami A."/>
            <person name="Fujiwara T."/>
            <person name="Ono T."/>
            <person name="Yamada K."/>
            <person name="Fujii Y."/>
            <person name="Ozaki K."/>
            <person name="Hirao M."/>
            <person name="Ohmori Y."/>
            <person name="Kawabata A."/>
            <person name="Hikiji T."/>
            <person name="Kobatake N."/>
            <person name="Inagaki H."/>
            <person name="Ikema Y."/>
            <person name="Okamoto S."/>
            <person name="Okitani R."/>
            <person name="Kawakami T."/>
            <person name="Noguchi S."/>
            <person name="Itoh T."/>
            <person name="Shigeta K."/>
            <person name="Senba T."/>
            <person name="Matsumura K."/>
            <person name="Nakajima Y."/>
            <person name="Mizuno T."/>
            <person name="Morinaga M."/>
            <person name="Sasaki M."/>
            <person name="Togashi T."/>
            <person name="Oyama M."/>
            <person name="Hata H."/>
            <person name="Watanabe M."/>
            <person name="Komatsu T."/>
            <person name="Mizushima-Sugano J."/>
            <person name="Satoh T."/>
            <person name="Shirai Y."/>
            <person name="Takahashi Y."/>
            <person name="Nakagawa K."/>
            <person name="Okumura K."/>
            <person name="Nagase T."/>
            <person name="Nomura N."/>
            <person name="Kikuchi H."/>
            <person name="Masuho Y."/>
            <person name="Yamashita R."/>
            <person name="Nakai K."/>
            <person name="Yada T."/>
            <person name="Nakamura Y."/>
            <person name="Ohara O."/>
            <person name="Isogai T."/>
            <person name="Sugano S."/>
        </authorList>
    </citation>
    <scope>NUCLEOTIDE SEQUENCE [LARGE SCALE MRNA]</scope>
    <source>
        <tissue>Astrocyte</tissue>
        <tissue>Umbilical cord blood</tissue>
    </source>
</reference>
<reference key="3">
    <citation type="journal article" date="2008" name="Nat. Methods">
        <title>Human protein factory for converting the transcriptome into an in vitro-expressed proteome.</title>
        <authorList>
            <person name="Goshima N."/>
            <person name="Kawamura Y."/>
            <person name="Fukumoto A."/>
            <person name="Miura A."/>
            <person name="Honma R."/>
            <person name="Satoh R."/>
            <person name="Wakamatsu A."/>
            <person name="Yamamoto J."/>
            <person name="Kimura K."/>
            <person name="Nishikawa T."/>
            <person name="Andoh T."/>
            <person name="Iida Y."/>
            <person name="Ishikawa K."/>
            <person name="Ito E."/>
            <person name="Kagawa N."/>
            <person name="Kaminaga C."/>
            <person name="Kanehori K."/>
            <person name="Kawakami B."/>
            <person name="Kenmochi K."/>
            <person name="Kimura R."/>
            <person name="Kobayashi M."/>
            <person name="Kuroita T."/>
            <person name="Kuwayama H."/>
            <person name="Maruyama Y."/>
            <person name="Matsuo K."/>
            <person name="Minami K."/>
            <person name="Mitsubori M."/>
            <person name="Mori M."/>
            <person name="Morishita R."/>
            <person name="Murase A."/>
            <person name="Nishikawa A."/>
            <person name="Nishikawa S."/>
            <person name="Okamoto T."/>
            <person name="Sakagami N."/>
            <person name="Sakamoto Y."/>
            <person name="Sasaki Y."/>
            <person name="Seki T."/>
            <person name="Sono S."/>
            <person name="Sugiyama A."/>
            <person name="Sumiya T."/>
            <person name="Takayama T."/>
            <person name="Takayama Y."/>
            <person name="Takeda H."/>
            <person name="Togashi T."/>
            <person name="Yahata K."/>
            <person name="Yamada H."/>
            <person name="Yanagisawa Y."/>
            <person name="Endo Y."/>
            <person name="Imamoto F."/>
            <person name="Kisu Y."/>
            <person name="Tanaka S."/>
            <person name="Isogai T."/>
            <person name="Imai J."/>
            <person name="Watanabe S."/>
            <person name="Nomura N."/>
        </authorList>
    </citation>
    <scope>NUCLEOTIDE SEQUENCE [LARGE SCALE MRNA]</scope>
</reference>
<reference key="4">
    <citation type="submission" date="2005-04" db="EMBL/GenBank/DDBJ databases">
        <authorList>
            <person name="Suzuki Y."/>
            <person name="Sugano S."/>
            <person name="Totoki Y."/>
            <person name="Toyoda A."/>
            <person name="Takeda T."/>
            <person name="Sakaki Y."/>
            <person name="Tanaka A."/>
            <person name="Yokoyama S."/>
        </authorList>
    </citation>
    <scope>NUCLEOTIDE SEQUENCE [LARGE SCALE MRNA]</scope>
    <source>
        <tissue>Endothelial cell</tissue>
    </source>
</reference>
<reference key="5">
    <citation type="submission" date="2005-07" db="EMBL/GenBank/DDBJ databases">
        <authorList>
            <person name="Mural R.J."/>
            <person name="Istrail S."/>
            <person name="Sutton G.G."/>
            <person name="Florea L."/>
            <person name="Halpern A.L."/>
            <person name="Mobarry C.M."/>
            <person name="Lippert R."/>
            <person name="Walenz B."/>
            <person name="Shatkay H."/>
            <person name="Dew I."/>
            <person name="Miller J.R."/>
            <person name="Flanigan M.J."/>
            <person name="Edwards N.J."/>
            <person name="Bolanos R."/>
            <person name="Fasulo D."/>
            <person name="Halldorsson B.V."/>
            <person name="Hannenhalli S."/>
            <person name="Turner R."/>
            <person name="Yooseph S."/>
            <person name="Lu F."/>
            <person name="Nusskern D.R."/>
            <person name="Shue B.C."/>
            <person name="Zheng X.H."/>
            <person name="Zhong F."/>
            <person name="Delcher A.L."/>
            <person name="Huson D.H."/>
            <person name="Kravitz S.A."/>
            <person name="Mouchard L."/>
            <person name="Reinert K."/>
            <person name="Remington K.A."/>
            <person name="Clark A.G."/>
            <person name="Waterman M.S."/>
            <person name="Eichler E.E."/>
            <person name="Adams M.D."/>
            <person name="Hunkapiller M.W."/>
            <person name="Myers E.W."/>
            <person name="Venter J.C."/>
        </authorList>
    </citation>
    <scope>NUCLEOTIDE SEQUENCE [LARGE SCALE GENOMIC DNA]</scope>
</reference>
<reference key="6">
    <citation type="journal article" date="2004" name="Genome Res.">
        <title>The status, quality, and expansion of the NIH full-length cDNA project: the Mammalian Gene Collection (MGC).</title>
        <authorList>
            <consortium name="The MGC Project Team"/>
        </authorList>
    </citation>
    <scope>NUCLEOTIDE SEQUENCE [LARGE SCALE MRNA]</scope>
    <source>
        <tissue>Lymph</tissue>
    </source>
</reference>
<reference key="7">
    <citation type="journal article" date="2003" name="Nat. Biotechnol.">
        <title>Exploring proteomes and analyzing protein processing by mass spectrometric identification of sorted N-terminal peptides.</title>
        <authorList>
            <person name="Gevaert K."/>
            <person name="Goethals M."/>
            <person name="Martens L."/>
            <person name="Van Damme J."/>
            <person name="Staes A."/>
            <person name="Thomas G.R."/>
            <person name="Vandekerckhove J."/>
        </authorList>
    </citation>
    <scope>PROTEIN SEQUENCE OF 2-17</scope>
    <source>
        <tissue>Platelet</tissue>
    </source>
</reference>
<reference key="8">
    <citation type="submission" date="2008-12" db="UniProtKB">
        <authorList>
            <person name="Bienvenut W.V."/>
            <person name="Boldt K."/>
            <person name="von Kriegsheim A."/>
            <person name="Kolch W."/>
            <person name="Heiserich L."/>
            <person name="Gottlieb E."/>
            <person name="Vousden K.H."/>
            <person name="Lukashchuk N."/>
            <person name="Lilla S."/>
            <person name="Lempens A."/>
        </authorList>
    </citation>
    <scope>PROTEIN SEQUENCE OF 2-54; 60-75; 182-191; 242-255; 276-285; 290-303; 318-342; 401-416; 453-460 AND 462-472</scope>
    <scope>CLEAVAGE OF INITIATOR METHIONINE</scope>
    <scope>ACETYLATION AT ALA-2</scope>
    <scope>IDENTIFICATION BY MASS SPECTROMETRY</scope>
    <source>
        <tissue>Colon carcinoma</tissue>
        <tissue>Hepatoma</tissue>
        <tissue>Lung carcinoma</tissue>
        <tissue>Ovarian carcinoma</tissue>
    </source>
</reference>
<reference key="9">
    <citation type="journal article" date="1998" name="Hum. Mol. Genet.">
        <title>Characterization of genes encoding translation initiation factor eIF-2gamma in mouse and human: sex chromosome localization, escape from X-inactivation and evolution.</title>
        <authorList>
            <person name="Ehrmann I.E."/>
            <person name="Ellis P.S."/>
            <person name="Mazeyrat S."/>
            <person name="Duthie S."/>
            <person name="Brockdorff N."/>
            <person name="Mattei M.-G."/>
            <person name="Gavin M.A."/>
            <person name="Affara N.A."/>
            <person name="Brown G.M."/>
            <person name="Simpson E."/>
            <person name="Mitchell M.J."/>
            <person name="Scott D.M."/>
        </authorList>
    </citation>
    <scope>TISSUE SPECIFICITY</scope>
    <scope>LACK OF HOMOLOG ON CHROMOSOME Y</scope>
    <scope>ESCAPE FROM X-INACTIVATION</scope>
</reference>
<reference key="10">
    <citation type="journal article" date="2011" name="BMC Syst. Biol.">
        <title>Initial characterization of the human central proteome.</title>
        <authorList>
            <person name="Burkard T.R."/>
            <person name="Planyavsky M."/>
            <person name="Kaupe I."/>
            <person name="Breitwieser F.P."/>
            <person name="Buerckstuemmer T."/>
            <person name="Bennett K.L."/>
            <person name="Superti-Furga G."/>
            <person name="Colinge J."/>
        </authorList>
    </citation>
    <scope>IDENTIFICATION BY MASS SPECTROMETRY [LARGE SCALE ANALYSIS]</scope>
</reference>
<reference key="11">
    <citation type="journal article" date="2015" name="Proteomics">
        <title>N-terminome analysis of the human mitochondrial proteome.</title>
        <authorList>
            <person name="Vaca Jacome A.S."/>
            <person name="Rabilloud T."/>
            <person name="Schaeffer-Reiss C."/>
            <person name="Rompais M."/>
            <person name="Ayoub D."/>
            <person name="Lane L."/>
            <person name="Bairoch A."/>
            <person name="Van Dorsselaer A."/>
            <person name="Carapito C."/>
        </authorList>
    </citation>
    <scope>IDENTIFICATION BY MASS SPECTROMETRY [LARGE SCALE ANALYSIS]</scope>
</reference>
<reference key="12">
    <citation type="journal article" date="2020" name="Mol. Cell">
        <title>Suppression of MEHMO Syndrome Mutation in eIF2 by Small Molecule ISRIB.</title>
        <authorList>
            <person name="Young-Baird S.K."/>
            <person name="Lourenco M.B."/>
            <person name="Elder M.K."/>
            <person name="Klann E."/>
            <person name="Liebau S."/>
            <person name="Dever T.E."/>
        </authorList>
    </citation>
    <scope>FUNCTION</scope>
    <scope>IDENTIFICATION IN THE EIF2 COMPLEX</scope>
</reference>
<reference key="13">
    <citation type="journal article" date="2022" name="J. Biol. Chem.">
        <title>Stepwise assembly of the eukaryotic translation initiation factor 2 complex.</title>
        <authorList>
            <person name="Vanselow S."/>
            <person name="Neumann-Arnold L."/>
            <person name="Wojciech-Moock F."/>
            <person name="Seufert W."/>
        </authorList>
    </citation>
    <scope>IDENTIFICATION IN THE EIF2 COMPLEX</scope>
    <scope>INTERACTION WITH CDC123</scope>
</reference>
<reference evidence="21" key="14">
    <citation type="journal article" date="2018" name="Nucleic Acids Res.">
        <title>Structure of a human cap-dependent 48S translation pre-initiation complex.</title>
        <authorList>
            <person name="Eliseev B."/>
            <person name="Yeramala L."/>
            <person name="Leitner A."/>
            <person name="Karuppasamy M."/>
            <person name="Raimondeau E."/>
            <person name="Huard K."/>
            <person name="Alkalaeva E."/>
            <person name="Aebersold R."/>
            <person name="Schaffitzel C."/>
        </authorList>
    </citation>
    <scope>STRUCTURE BY ELECTRON MICROSCOPY (6.30 ANGSTROMS) OF 39-460</scope>
</reference>
<reference evidence="24 25" key="15">
    <citation type="journal article" date="2019" name="Science">
        <title>eIF2B-catalyzed nucleotide exchange and phosphoregulation by the integrated stress response.</title>
        <authorList>
            <person name="Kenner L.R."/>
            <person name="Anand A.A."/>
            <person name="Nguyen H.C."/>
            <person name="Myasnikov A.G."/>
            <person name="Klose C.J."/>
            <person name="McGeever L.A."/>
            <person name="Tsai J.C."/>
            <person name="Miller-Vedam L.E."/>
            <person name="Walter P."/>
            <person name="Frost A."/>
        </authorList>
    </citation>
    <scope>STRUCTURE BY ELECTRON MICROSCOPY (3.03 ANGSTROMS)</scope>
</reference>
<reference evidence="22 23" key="16">
    <citation type="journal article" date="2019" name="Science">
        <title>Structural basis for eIF2B inhibition in integrated stress response.</title>
        <authorList>
            <person name="Kashiwagi K."/>
            <person name="Yokoyama T."/>
            <person name="Nishimoto M."/>
            <person name="Takahashi M."/>
            <person name="Sakamoto A."/>
            <person name="Yonemochi M."/>
            <person name="Shirouzu M."/>
            <person name="Ito T."/>
        </authorList>
    </citation>
    <scope>STRUCTURE BY ELECTRON MICROSCOPY (4.30 ANGSTROMS) IN COMPLEX WITH THE EIF2B COMPLEX</scope>
    <scope>IDENTIFICATION IN THE EIF2 COMPLEX</scope>
</reference>
<reference evidence="26 27" key="17">
    <citation type="journal article" date="2023" name="J. Struct. Biol.">
        <title>Binding of human Cdc123 to eIF2gamma.</title>
        <authorList>
            <person name="Cardenal Peralta C."/>
            <person name="Vandroux P."/>
            <person name="Neumann-Arnold L."/>
            <person name="Panvert M."/>
            <person name="Fagart J."/>
            <person name="Seufert W."/>
            <person name="Mechulam Y."/>
            <person name="Schmitt E."/>
        </authorList>
    </citation>
    <scope>X-RAY CRYSTALLOGRAPHY (1.97 ANGSTROMS) OF 363-465 IN COMPLEX WITH MAGNESIUM; ATP AND CDC123</scope>
    <scope>INTERACTION WITH CDC123</scope>
</reference>
<reference key="18">
    <citation type="journal article" date="2012" name="Mol. Cell">
        <title>eIF2gamma mutation that disrupts eIF2 complex integrity links intellectual disability to impaired translation initiation.</title>
        <authorList>
            <person name="Borck G."/>
            <person name="Shin B.S."/>
            <person name="Stiller B."/>
            <person name="Mimouni-Bloch A."/>
            <person name="Thiele H."/>
            <person name="Kim J.R."/>
            <person name="Thakur M."/>
            <person name="Skinner C."/>
            <person name="Aschenbach L."/>
            <person name="Smirin-Yosef P."/>
            <person name="Har-Zahav A."/>
            <person name="Nuernberg G."/>
            <person name="Altmueller J."/>
            <person name="Frommolt P."/>
            <person name="Hofmann K."/>
            <person name="Konen O."/>
            <person name="Nuernberg P."/>
            <person name="Munnich A."/>
            <person name="Schwartz C.E."/>
            <person name="Gothelf D."/>
            <person name="Colleaux L."/>
            <person name="Dever T.E."/>
            <person name="Kubisch C."/>
            <person name="Basel-Vanagaite L."/>
        </authorList>
    </citation>
    <scope>INVOLVEMENT IN MEHMO</scope>
    <scope>VARIANT MEHMO THR-222</scope>
    <scope>CHARACTERIZATION OF VARIANT MEHMO THR-222</scope>
    <scope>SUBUNIT</scope>
</reference>
<reference key="19">
    <citation type="journal article" date="2016" name="Am. J. Med. Genet. A">
        <title>Two novel EIF2S3 mutations associated with syndromic intellectual disability with severe microcephaly, growth retardation, and epilepsy.</title>
        <authorList>
            <person name="Moortgat S."/>
            <person name="Desir J."/>
            <person name="Benoit V."/>
            <person name="Boulanger S."/>
            <person name="Pendeville H."/>
            <person name="Nassogne M.C."/>
            <person name="Lederer D."/>
            <person name="Maystadt I."/>
        </authorList>
    </citation>
    <scope>INVOLVEMENT IN MEHMO</scope>
    <scope>VARIANT MEHMO MET-259</scope>
</reference>
<reference key="20">
    <citation type="journal article" date="2017" name="Hum. Mutat.">
        <title>EIF2S3 mutations associated with severe X-linked intellectual disability syndrome MEHMO.</title>
        <authorList>
            <person name="Skopkova M."/>
            <person name="Hennig F."/>
            <person name="Shin B.S."/>
            <person name="Turner C.E."/>
            <person name="Stanikova D."/>
            <person name="Brennerova K."/>
            <person name="Stanik J."/>
            <person name="Fischer U."/>
            <person name="Henden L."/>
            <person name="Mueller U."/>
            <person name="Steinberger D."/>
            <person name="Leshinsky-Silver E."/>
            <person name="Bottani A."/>
            <person name="Kurdiova T."/>
            <person name="Ukropec J."/>
            <person name="Nyitrayova O."/>
            <person name="Kolnikova M."/>
            <person name="Klimes I."/>
            <person name="Borck G."/>
            <person name="Bahlo M."/>
            <person name="Haas S.A."/>
            <person name="Kim J.R."/>
            <person name="Lotspeich-Cole L.E."/>
            <person name="Gasperikova D."/>
            <person name="Dever T.E."/>
            <person name="Kalscheuer V.M."/>
        </authorList>
    </citation>
    <scope>INVOLVEMENT IN MEHMO</scope>
    <scope>VARIANT MEHMO ARG-108</scope>
</reference>
<reference key="21">
    <citation type="journal article" date="2019" name="EBioMedicine">
        <title>Impaired EIF2S3 function associated with a novel phenotype of X-linked hypopituitarism with glucose dysregulation.</title>
        <authorList>
            <person name="Gregory L.C."/>
            <person name="Ferreira C.B."/>
            <person name="Young-Baird S.K."/>
            <person name="Williams H.J."/>
            <person name="Harakalova M."/>
            <person name="van Haaften G."/>
            <person name="Rahman S.A."/>
            <person name="Gaston-Massuet C."/>
            <person name="Kelberman D."/>
            <person name="Qasim W."/>
            <person name="Camper S.A."/>
            <person name="Dever T.E."/>
            <person name="Shah P."/>
            <person name="Robinson I.C.A.F."/>
            <person name="Dattani M.T."/>
        </authorList>
    </citation>
    <scope>VARIANT SER-432</scope>
    <scope>DEVELOPMENTAL STAGE</scope>
    <scope>INVOLVEMENT IN HYPOPITUITARISM WITH GLUCOSE DYSREGULATION</scope>
</reference>
<reference key="22">
    <citation type="journal article" date="2019" name="Nucleic Acids Res.">
        <title>MEHMO syndrome mutation EIF2S3-I259M impairs initiator Met-tRNAiMet binding to eukaryotic translation initiation factor eIF2.</title>
        <authorList>
            <person name="Young-Baird S.K."/>
            <person name="Shin B.S."/>
            <person name="Dever T.E."/>
        </authorList>
    </citation>
    <scope>CHARACTERIZATION OF VARIANT MEHMO MET-259</scope>
    <scope>INVOLVEMENT IN MEHMO</scope>
</reference>
<reference key="23">
    <citation type="journal article" date="2020" name="Clin. Genet.">
        <title>Novel pathogenic EIF2S3 missense variants causing clinically variable MEHMO syndrome with impaired eIF2gamma translational function, and literature review.</title>
        <authorList>
            <person name="Kotzaeridou U."/>
            <person name="Young-Baird S.K."/>
            <person name="Suckow V."/>
            <person name="Thornburg A.G."/>
            <person name="Wagner M."/>
            <person name="Harting I."/>
            <person name="Christ S."/>
            <person name="Strom T."/>
            <person name="Dever T.E."/>
            <person name="Kalscheuer V.M."/>
        </authorList>
    </citation>
    <scope>VARIANTS MEHMO ILE-144 AND LEU-159</scope>
    <scope>INVOLVEMENT IN MEHMO</scope>
</reference>